<proteinExistence type="evidence at protein level"/>
<comment type="function">
    <text evidence="2">Plays a role in pre-mRNA splicing as a core component of the spliceosomal U1, U2, U4 and U5 small nuclear ribonucleoproteins (snRNPs), the building blocks of the spliceosome (By similarity).</text>
</comment>
<comment type="subunit">
    <text evidence="4 5 6 8">Component of the Sm core complex, present in spliceosomal snRNP U1, U2, U4/U6 and U5. The core complex contains SMB1, SMD1, SMD2, SMD3, SME1, SMX3 and SMX2 (Sm proteins B, D1, D2, D3, E, F and G, respectively), and is probably a heptameric ring structure. SMX3 specifically interacts with SME1. Belongs to the CWC complex (or CEF1-associated complex), a spliceosome sub-complex reminiscent of a late-stage spliceosome composed of the U2, U5 and U6 snRNAs and at least BUD13, BUD31, BRR2, CDC40, CEF1, CLF1, CUS1, CWC2, CWC15, CWC21, CWC22, CWC23, CWC24, CWC25, CWC27, ECM2, HSH155, IST3, ISY1, LEA1, MSL1, NTC20, PRP8, PRP9, PRP11, PRP19, PRP21, PRP22, PRP45, PRP46, SLU7, SMB1, SMD1, SMD2, SMD3, SMX2, SMX3, SNT309, SNU114, SPP2, SYF1, SYF2, RSE1 and YJU2. Component of the U4/U6-U5 tri-snRNP complex composed of the U4, U6 and U5 snRNAs and at least PRP3, PRP4, PRP6, PRP8, PRP18, PRP31, PRP38, SNU13, SNU23, SNU66, SNU114, SPP381, SMB1, SMD1, SMD2, SMD3, SMX2, SMX3, LSM2, LSM3, LSM4, LSM5, LSM6, LSM7, LSM8, BRR2 and DIB1.</text>
</comment>
<comment type="interaction">
    <interactant intactId="EBI-770">
        <id>P54999</id>
    </interactant>
    <interactant intactId="EBI-235">
        <id>Q06217</id>
        <label>SMD2</label>
    </interactant>
    <organismsDiffer>false</organismsDiffer>
    <experiments>3</experiments>
</comment>
<comment type="interaction">
    <interactant intactId="EBI-770">
        <id>P54999</id>
    </interactant>
    <interactant intactId="EBI-16359">
        <id>Q12330</id>
        <label>SME1</label>
    </interactant>
    <organismsDiffer>false</organismsDiffer>
    <experiments>7</experiments>
</comment>
<comment type="subcellular location">
    <subcellularLocation>
        <location evidence="1">Nucleus</location>
    </subcellularLocation>
    <subcellularLocation>
        <location evidence="1">Cytoplasm</location>
    </subcellularLocation>
</comment>
<comment type="miscellaneous">
    <text evidence="7">Present with 2570 molecules/cell in log phase SD medium.</text>
</comment>
<comment type="similarity">
    <text evidence="9">Belongs to the snRNP Sm proteins family. SmF/LSm6 subfamily.</text>
</comment>
<reference key="1">
    <citation type="journal article" date="1995" name="EMBO J.">
        <title>Sm and Sm-like proteins belong to a large family: identification of proteins of the U6 as well as the U1, U2, U4 and U5 snRNPs.</title>
        <authorList>
            <person name="Seraphin B."/>
        </authorList>
    </citation>
    <scope>NUCLEOTIDE SEQUENCE [GENOMIC DNA]</scope>
</reference>
<reference key="2">
    <citation type="journal article" date="1998" name="Mol. Cell. Biol.">
        <title>Interactions within the yeast Sm core complex: from proteins to amino acids.</title>
        <authorList>
            <person name="Camasses A."/>
            <person name="Bragado-Nilsson E."/>
            <person name="Martin R."/>
            <person name="Seraphin B."/>
            <person name="Bordonne R."/>
        </authorList>
    </citation>
    <scope>NUCLEOTIDE SEQUENCE [GENOMIC DNA]</scope>
    <scope>INTERACTION WITH SME1</scope>
</reference>
<reference key="3">
    <citation type="journal article" date="1997" name="Nature">
        <title>The nucleotide sequence of Saccharomyces cerevisiae chromosome XVI.</title>
        <authorList>
            <person name="Bussey H."/>
            <person name="Storms R.K."/>
            <person name="Ahmed A."/>
            <person name="Albermann K."/>
            <person name="Allen E."/>
            <person name="Ansorge W."/>
            <person name="Araujo R."/>
            <person name="Aparicio A."/>
            <person name="Barrell B.G."/>
            <person name="Badcock K."/>
            <person name="Benes V."/>
            <person name="Botstein D."/>
            <person name="Bowman S."/>
            <person name="Brueckner M."/>
            <person name="Carpenter J."/>
            <person name="Cherry J.M."/>
            <person name="Chung E."/>
            <person name="Churcher C.M."/>
            <person name="Coster F."/>
            <person name="Davis K."/>
            <person name="Davis R.W."/>
            <person name="Dietrich F.S."/>
            <person name="Delius H."/>
            <person name="DiPaolo T."/>
            <person name="Dubois E."/>
            <person name="Duesterhoeft A."/>
            <person name="Duncan M."/>
            <person name="Floeth M."/>
            <person name="Fortin N."/>
            <person name="Friesen J.D."/>
            <person name="Fritz C."/>
            <person name="Goffeau A."/>
            <person name="Hall J."/>
            <person name="Hebling U."/>
            <person name="Heumann K."/>
            <person name="Hilbert H."/>
            <person name="Hillier L.W."/>
            <person name="Hunicke-Smith S."/>
            <person name="Hyman R.W."/>
            <person name="Johnston M."/>
            <person name="Kalman S."/>
            <person name="Kleine K."/>
            <person name="Komp C."/>
            <person name="Kurdi O."/>
            <person name="Lashkari D."/>
            <person name="Lew H."/>
            <person name="Lin A."/>
            <person name="Lin D."/>
            <person name="Louis E.J."/>
            <person name="Marathe R."/>
            <person name="Messenguy F."/>
            <person name="Mewes H.-W."/>
            <person name="Mirtipati S."/>
            <person name="Moestl D."/>
            <person name="Mueller-Auer S."/>
            <person name="Namath A."/>
            <person name="Nentwich U."/>
            <person name="Oefner P."/>
            <person name="Pearson D."/>
            <person name="Petel F.X."/>
            <person name="Pohl T.M."/>
            <person name="Purnelle B."/>
            <person name="Rajandream M.A."/>
            <person name="Rechmann S."/>
            <person name="Rieger M."/>
            <person name="Riles L."/>
            <person name="Roberts D."/>
            <person name="Schaefer M."/>
            <person name="Scharfe M."/>
            <person name="Scherens B."/>
            <person name="Schramm S."/>
            <person name="Schroeder M."/>
            <person name="Sdicu A.-M."/>
            <person name="Tettelin H."/>
            <person name="Urrestarazu L.A."/>
            <person name="Ushinsky S."/>
            <person name="Vierendeels F."/>
            <person name="Vissers S."/>
            <person name="Voss H."/>
            <person name="Walsh S.V."/>
            <person name="Wambutt R."/>
            <person name="Wang Y."/>
            <person name="Wedler E."/>
            <person name="Wedler H."/>
            <person name="Winnett E."/>
            <person name="Zhong W.-W."/>
            <person name="Zollner A."/>
            <person name="Vo D.H."/>
            <person name="Hani J."/>
        </authorList>
    </citation>
    <scope>NUCLEOTIDE SEQUENCE [LARGE SCALE GENOMIC DNA]</scope>
    <source>
        <strain>ATCC 204508 / S288c</strain>
    </source>
</reference>
<reference key="4">
    <citation type="journal article" date="2014" name="G3 (Bethesda)">
        <title>The reference genome sequence of Saccharomyces cerevisiae: Then and now.</title>
        <authorList>
            <person name="Engel S.R."/>
            <person name="Dietrich F.S."/>
            <person name="Fisk D.G."/>
            <person name="Binkley G."/>
            <person name="Balakrishnan R."/>
            <person name="Costanzo M.C."/>
            <person name="Dwight S.S."/>
            <person name="Hitz B.C."/>
            <person name="Karra K."/>
            <person name="Nash R.S."/>
            <person name="Weng S."/>
            <person name="Wong E.D."/>
            <person name="Lloyd P."/>
            <person name="Skrzypek M.S."/>
            <person name="Miyasato S.R."/>
            <person name="Simison M."/>
            <person name="Cherry J.M."/>
        </authorList>
    </citation>
    <scope>GENOME REANNOTATION</scope>
    <source>
        <strain>ATCC 204508 / S288c</strain>
    </source>
</reference>
<reference key="5">
    <citation type="journal article" date="2007" name="Genome Res.">
        <title>Approaching a complete repository of sequence-verified protein-encoding clones for Saccharomyces cerevisiae.</title>
        <authorList>
            <person name="Hu Y."/>
            <person name="Rolfs A."/>
            <person name="Bhullar B."/>
            <person name="Murthy T.V.S."/>
            <person name="Zhu C."/>
            <person name="Berger M.F."/>
            <person name="Camargo A.A."/>
            <person name="Kelley F."/>
            <person name="McCarron S."/>
            <person name="Jepson D."/>
            <person name="Richardson A."/>
            <person name="Raphael J."/>
            <person name="Moreira D."/>
            <person name="Taycher E."/>
            <person name="Zuo D."/>
            <person name="Mohr S."/>
            <person name="Kane M.F."/>
            <person name="Williamson J."/>
            <person name="Simpson A.J.G."/>
            <person name="Bulyk M.L."/>
            <person name="Harlow E."/>
            <person name="Marsischky G."/>
            <person name="Kolodner R.D."/>
            <person name="LaBaer J."/>
        </authorList>
    </citation>
    <scope>NUCLEOTIDE SEQUENCE [GENOMIC DNA]</scope>
    <source>
        <strain>ATCC 204508 / S288c</strain>
    </source>
</reference>
<reference key="6">
    <citation type="journal article" date="1997" name="Proc. Natl. Acad. Sci. U.S.A.">
        <title>Identification of the proteins of the yeast U1 small nuclear ribonucleoprotein complex by mass spectrometry.</title>
        <authorList>
            <person name="Neubauer G."/>
            <person name="Gottschalk A."/>
            <person name="Fabrizio P."/>
            <person name="Seraphin B."/>
            <person name="Luehrmann R."/>
            <person name="Mann M."/>
        </authorList>
    </citation>
    <scope>PARTIAL PROTEIN SEQUENCE</scope>
</reference>
<reference key="7">
    <citation type="journal article" date="1999" name="EMBO J.">
        <title>Sm and Sm-like proteins assemble in two related complexes of deep evolutionary origin.</title>
        <authorList>
            <person name="Salgado-Garrido J."/>
            <person name="Bragado-Nilsson E."/>
            <person name="Kandels-Lewis S."/>
            <person name="Seraphin B."/>
        </authorList>
    </citation>
    <scope>RNA-BINDING</scope>
</reference>
<reference key="8">
    <citation type="journal article" date="1999" name="EMBO J.">
        <title>Identification by mass spectrometry and functional analysis of novel proteins of the yeast [U4/U6.U5] tri-snRNP.</title>
        <authorList>
            <person name="Gottschalk A."/>
            <person name="Neubauer G."/>
            <person name="Banroques J."/>
            <person name="Mann M."/>
            <person name="Luehrmann R."/>
            <person name="Fabrizio P."/>
        </authorList>
    </citation>
    <scope>SUBUNIT</scope>
    <scope>IDENTIFICATION IN THE U4/U5/U6 TRI-SNRNP COMPLEX</scope>
    <scope>IDENTIFICATION BY MASS SPECTROMETRY</scope>
</reference>
<reference key="9">
    <citation type="journal article" date="2001" name="J. Mol. Biol.">
        <title>Stoichiometry of the Sm proteins in yeast spliceosomal snRNPs supports the heptamer ring model of the core domain.</title>
        <authorList>
            <person name="Walke S."/>
            <person name="Bragado-Nilsson E."/>
            <person name="Seraphin B."/>
            <person name="Nagai K."/>
        </authorList>
    </citation>
    <scope>SUBUNIT</scope>
</reference>
<reference key="10">
    <citation type="journal article" date="2002" name="Mol. Cell">
        <title>Composition and functional characterization of the yeast spliceosomal penta-snRNP.</title>
        <authorList>
            <person name="Stevens S.W."/>
            <person name="Ryan D.E."/>
            <person name="Ge H.Y."/>
            <person name="Moore R.E."/>
            <person name="Young M.K."/>
            <person name="Lee T.D."/>
            <person name="Abelson J."/>
        </authorList>
    </citation>
    <scope>CHARACTERIZATION OF THE SPLICEOSOME</scope>
</reference>
<reference key="11">
    <citation type="journal article" date="2002" name="Mol. Cell. Biol.">
        <title>Proteomics analysis reveals stable multiprotein complexes in both fission and budding yeasts containing Myb-related Cdc5p/Cef1p, novel pre-mRNA splicing factors, and snRNAs.</title>
        <authorList>
            <person name="Ohi M.D."/>
            <person name="Link A.J."/>
            <person name="Ren L."/>
            <person name="Jennings J.L."/>
            <person name="McDonald W.H."/>
            <person name="Gould K.L."/>
        </authorList>
    </citation>
    <scope>IDENTIFICATION IN THE CWC COMPLEX</scope>
    <scope>IDENTIFICATION BY MASS SPECTROMETRY</scope>
</reference>
<reference key="12">
    <citation type="journal article" date="2003" name="Mol. Cell">
        <title>Assigning function to yeast proteins by integration of technologies.</title>
        <authorList>
            <person name="Hazbun T.R."/>
            <person name="Malmstroem L."/>
            <person name="Anderson S."/>
            <person name="Graczyk B.J."/>
            <person name="Fox B."/>
            <person name="Riffle M."/>
            <person name="Sundin B.A."/>
            <person name="Aranda J.D."/>
            <person name="McDonald W.H."/>
            <person name="Chiu C.-H."/>
            <person name="Snydsman B.E."/>
            <person name="Bradley P."/>
            <person name="Muller E.G.D."/>
            <person name="Fields S."/>
            <person name="Baker D."/>
            <person name="Yates J.R. III"/>
            <person name="Davis T.N."/>
        </authorList>
    </citation>
    <scope>IDENTIFICATION BY MASS SPECTROMETRY</scope>
</reference>
<reference key="13">
    <citation type="journal article" date="2003" name="Nature">
        <title>Global analysis of protein expression in yeast.</title>
        <authorList>
            <person name="Ghaemmaghami S."/>
            <person name="Huh W.-K."/>
            <person name="Bower K."/>
            <person name="Howson R.W."/>
            <person name="Belle A."/>
            <person name="Dephoure N."/>
            <person name="O'Shea E.K."/>
            <person name="Weissman J.S."/>
        </authorList>
    </citation>
    <scope>LEVEL OF PROTEIN EXPRESSION [LARGE SCALE ANALYSIS]</scope>
</reference>
<reference key="14">
    <citation type="journal article" date="2003" name="J. Biol. Chem.">
        <title>Homomeric ring assemblies of eukaryotic Sm proteins have affinity for both RNA and DNA. Crystal structure of an oligomeric complex of yeast SmF.</title>
        <authorList>
            <person name="Collins B.M."/>
            <person name="Cubeddu L."/>
            <person name="Naidoo N."/>
            <person name="Harrop S.J."/>
            <person name="Kornfeld G.D."/>
            <person name="Dawes I.W."/>
            <person name="Curmi P.M."/>
            <person name="Mabbutt B.C."/>
        </authorList>
    </citation>
    <scope>X-RAY CRYSTALLOGRAPHY (2.8 ANGSTROMS) OF WILD-TYPE AND MUTANT SER-75</scope>
</reference>
<organism>
    <name type="scientific">Saccharomyces cerevisiae (strain ATCC 204508 / S288c)</name>
    <name type="common">Baker's yeast</name>
    <dbReference type="NCBI Taxonomy" id="559292"/>
    <lineage>
        <taxon>Eukaryota</taxon>
        <taxon>Fungi</taxon>
        <taxon>Dikarya</taxon>
        <taxon>Ascomycota</taxon>
        <taxon>Saccharomycotina</taxon>
        <taxon>Saccharomycetes</taxon>
        <taxon>Saccharomycetales</taxon>
        <taxon>Saccharomycetaceae</taxon>
        <taxon>Saccharomyces</taxon>
    </lineage>
</organism>
<keyword id="KW-0002">3D-structure</keyword>
<keyword id="KW-0963">Cytoplasm</keyword>
<keyword id="KW-0903">Direct protein sequencing</keyword>
<keyword id="KW-0507">mRNA processing</keyword>
<keyword id="KW-0508">mRNA splicing</keyword>
<keyword id="KW-0539">Nucleus</keyword>
<keyword id="KW-1185">Reference proteome</keyword>
<keyword id="KW-0687">Ribonucleoprotein</keyword>
<keyword id="KW-0694">RNA-binding</keyword>
<keyword id="KW-0747">Spliceosome</keyword>
<accession>P54999</accession>
<accession>D6W4I2</accession>
<name>RUXF_YEAST</name>
<dbReference type="EMBL" id="X82778">
    <property type="protein sequence ID" value="CAA58022.1"/>
    <property type="molecule type" value="Genomic_DNA"/>
</dbReference>
<dbReference type="EMBL" id="U25842">
    <property type="protein sequence ID" value="AAB68115.1"/>
    <property type="molecule type" value="Genomic_DNA"/>
</dbReference>
<dbReference type="EMBL" id="AY558049">
    <property type="protein sequence ID" value="AAS56375.1"/>
    <property type="molecule type" value="Genomic_DNA"/>
</dbReference>
<dbReference type="EMBL" id="BK006949">
    <property type="protein sequence ID" value="DAA11598.1"/>
    <property type="molecule type" value="Genomic_DNA"/>
</dbReference>
<dbReference type="PIR" id="S55055">
    <property type="entry name" value="S55055"/>
</dbReference>
<dbReference type="RefSeq" id="NP_015508.1">
    <property type="nucleotide sequence ID" value="NM_001184279.1"/>
</dbReference>
<dbReference type="PDB" id="1N9R">
    <property type="method" value="X-ray"/>
    <property type="resolution" value="2.80 A"/>
    <property type="chains" value="A/B/C/D/E/F/G=1-86"/>
</dbReference>
<dbReference type="PDB" id="1N9S">
    <property type="method" value="X-ray"/>
    <property type="resolution" value="3.50 A"/>
    <property type="chains" value="A/B/C/D/E/F/G/H/I/J/K/L/M/N=1-86"/>
</dbReference>
<dbReference type="PDB" id="3JCM">
    <property type="method" value="EM"/>
    <property type="resolution" value="3.80 A"/>
    <property type="chains" value="W/Z=1-86"/>
</dbReference>
<dbReference type="PDB" id="5GAM">
    <property type="method" value="EM"/>
    <property type="resolution" value="3.70 A"/>
    <property type="chains" value="f=1-86"/>
</dbReference>
<dbReference type="PDB" id="5GAN">
    <property type="method" value="EM"/>
    <property type="resolution" value="3.60 A"/>
    <property type="chains" value="f/q=1-86"/>
</dbReference>
<dbReference type="PDB" id="5GAO">
    <property type="method" value="EM"/>
    <property type="resolution" value="3.60 A"/>
    <property type="chains" value="q=1-86"/>
</dbReference>
<dbReference type="PDB" id="5GM6">
    <property type="method" value="EM"/>
    <property type="resolution" value="3.50 A"/>
    <property type="chains" value="h=1-86"/>
</dbReference>
<dbReference type="PDB" id="5GMK">
    <property type="method" value="EM"/>
    <property type="resolution" value="3.40 A"/>
    <property type="chains" value="h/w=1-86"/>
</dbReference>
<dbReference type="PDB" id="5LJ3">
    <property type="method" value="EM"/>
    <property type="resolution" value="3.80 A"/>
    <property type="chains" value="f/q=1-86"/>
</dbReference>
<dbReference type="PDB" id="5LJ5">
    <property type="method" value="EM"/>
    <property type="resolution" value="3.80 A"/>
    <property type="chains" value="f/q=1-86"/>
</dbReference>
<dbReference type="PDB" id="5LQW">
    <property type="method" value="EM"/>
    <property type="resolution" value="5.80 A"/>
    <property type="chains" value="f=1-86"/>
</dbReference>
<dbReference type="PDB" id="5MPS">
    <property type="method" value="EM"/>
    <property type="resolution" value="3.85 A"/>
    <property type="chains" value="f=1-86"/>
</dbReference>
<dbReference type="PDB" id="5MQ0">
    <property type="method" value="EM"/>
    <property type="resolution" value="4.17 A"/>
    <property type="chains" value="f/q=1-86"/>
</dbReference>
<dbReference type="PDB" id="5NRL">
    <property type="method" value="EM"/>
    <property type="resolution" value="7.20 A"/>
    <property type="chains" value="f/q/x=1-86"/>
</dbReference>
<dbReference type="PDB" id="5WSG">
    <property type="method" value="EM"/>
    <property type="resolution" value="4.00 A"/>
    <property type="chains" value="H/h=1-86"/>
</dbReference>
<dbReference type="PDB" id="5Y88">
    <property type="method" value="EM"/>
    <property type="resolution" value="3.70 A"/>
    <property type="chains" value="c/j=1-86"/>
</dbReference>
<dbReference type="PDB" id="5YLZ">
    <property type="method" value="EM"/>
    <property type="resolution" value="3.60 A"/>
    <property type="chains" value="c/j=1-86"/>
</dbReference>
<dbReference type="PDB" id="5ZWM">
    <property type="method" value="EM"/>
    <property type="resolution" value="3.40 A"/>
    <property type="chains" value="U/f/j=1-86"/>
</dbReference>
<dbReference type="PDB" id="5ZWN">
    <property type="method" value="EM"/>
    <property type="resolution" value="3.30 A"/>
    <property type="chains" value="f=1-86"/>
</dbReference>
<dbReference type="PDB" id="5ZWO">
    <property type="method" value="EM"/>
    <property type="resolution" value="3.90 A"/>
    <property type="chains" value="U/f/j=1-86"/>
</dbReference>
<dbReference type="PDB" id="6BK8">
    <property type="method" value="EM"/>
    <property type="resolution" value="3.30 A"/>
    <property type="chains" value="b/m=1-86"/>
</dbReference>
<dbReference type="PDB" id="6EXN">
    <property type="method" value="EM"/>
    <property type="resolution" value="3.70 A"/>
    <property type="chains" value="f/q=1-86"/>
</dbReference>
<dbReference type="PDB" id="6G90">
    <property type="method" value="EM"/>
    <property type="resolution" value="4.00 A"/>
    <property type="chains" value="f/x=1-86"/>
</dbReference>
<dbReference type="PDB" id="6J6G">
    <property type="method" value="EM"/>
    <property type="resolution" value="3.20 A"/>
    <property type="chains" value="h/w=1-86"/>
</dbReference>
<dbReference type="PDB" id="6J6H">
    <property type="method" value="EM"/>
    <property type="resolution" value="3.60 A"/>
    <property type="chains" value="h/w=1-86"/>
</dbReference>
<dbReference type="PDB" id="6J6N">
    <property type="method" value="EM"/>
    <property type="resolution" value="3.86 A"/>
    <property type="chains" value="h/w=1-86"/>
</dbReference>
<dbReference type="PDB" id="6J6Q">
    <property type="method" value="EM"/>
    <property type="resolution" value="3.70 A"/>
    <property type="chains" value="h/w=1-86"/>
</dbReference>
<dbReference type="PDB" id="6N7P">
    <property type="method" value="EM"/>
    <property type="resolution" value="3.60 A"/>
    <property type="chains" value="P=1-86"/>
</dbReference>
<dbReference type="PDB" id="6N7R">
    <property type="method" value="EM"/>
    <property type="resolution" value="3.20 A"/>
    <property type="chains" value="P=1-86"/>
</dbReference>
<dbReference type="PDB" id="6N7X">
    <property type="method" value="EM"/>
    <property type="resolution" value="3.60 A"/>
    <property type="chains" value="P=1-86"/>
</dbReference>
<dbReference type="PDB" id="7B9V">
    <property type="method" value="EM"/>
    <property type="resolution" value="2.80 A"/>
    <property type="chains" value="f/q=1-86"/>
</dbReference>
<dbReference type="PDB" id="7OQB">
    <property type="method" value="EM"/>
    <property type="resolution" value="9.00 A"/>
    <property type="chains" value="x=1-86"/>
</dbReference>
<dbReference type="PDB" id="7OQC">
    <property type="method" value="EM"/>
    <property type="resolution" value="4.10 A"/>
    <property type="chains" value="f=1-86"/>
</dbReference>
<dbReference type="PDB" id="7OQE">
    <property type="method" value="EM"/>
    <property type="resolution" value="5.90 A"/>
    <property type="chains" value="f/x=1-86"/>
</dbReference>
<dbReference type="PDB" id="8W2O">
    <property type="method" value="EM"/>
    <property type="resolution" value="3.49 A"/>
    <property type="chains" value="P=1-86"/>
</dbReference>
<dbReference type="PDB" id="9DTR">
    <property type="method" value="EM"/>
    <property type="resolution" value="2.31 A"/>
    <property type="chains" value="f/q=1-86"/>
</dbReference>
<dbReference type="PDBsum" id="1N9R"/>
<dbReference type="PDBsum" id="1N9S"/>
<dbReference type="PDBsum" id="3JCM"/>
<dbReference type="PDBsum" id="5GAM"/>
<dbReference type="PDBsum" id="5GAN"/>
<dbReference type="PDBsum" id="5GAO"/>
<dbReference type="PDBsum" id="5GM6"/>
<dbReference type="PDBsum" id="5GMK"/>
<dbReference type="PDBsum" id="5LJ3"/>
<dbReference type="PDBsum" id="5LJ5"/>
<dbReference type="PDBsum" id="5LQW"/>
<dbReference type="PDBsum" id="5MPS"/>
<dbReference type="PDBsum" id="5MQ0"/>
<dbReference type="PDBsum" id="5NRL"/>
<dbReference type="PDBsum" id="5WSG"/>
<dbReference type="PDBsum" id="5Y88"/>
<dbReference type="PDBsum" id="5YLZ"/>
<dbReference type="PDBsum" id="5ZWM"/>
<dbReference type="PDBsum" id="5ZWN"/>
<dbReference type="PDBsum" id="5ZWO"/>
<dbReference type="PDBsum" id="6BK8"/>
<dbReference type="PDBsum" id="6EXN"/>
<dbReference type="PDBsum" id="6G90"/>
<dbReference type="PDBsum" id="6J6G"/>
<dbReference type="PDBsum" id="6J6H"/>
<dbReference type="PDBsum" id="6J6N"/>
<dbReference type="PDBsum" id="6J6Q"/>
<dbReference type="PDBsum" id="6N7P"/>
<dbReference type="PDBsum" id="6N7R"/>
<dbReference type="PDBsum" id="6N7X"/>
<dbReference type="PDBsum" id="7B9V"/>
<dbReference type="PDBsum" id="7OQB"/>
<dbReference type="PDBsum" id="7OQC"/>
<dbReference type="PDBsum" id="7OQE"/>
<dbReference type="PDBsum" id="8W2O"/>
<dbReference type="PDBsum" id="9DTR"/>
<dbReference type="EMDB" id="EMD-0360"/>
<dbReference type="EMDB" id="EMD-0361"/>
<dbReference type="EMDB" id="EMD-0686"/>
<dbReference type="EMDB" id="EMD-0687"/>
<dbReference type="EMDB" id="EMD-0691"/>
<dbReference type="EMDB" id="EMD-0692"/>
<dbReference type="EMDB" id="EMD-12106"/>
<dbReference type="EMDB" id="EMD-13028"/>
<dbReference type="EMDB" id="EMD-13029"/>
<dbReference type="EMDB" id="EMD-13033"/>
<dbReference type="EMDB" id="EMD-3539"/>
<dbReference type="EMDB" id="EMD-3541"/>
<dbReference type="EMDB" id="EMD-3683"/>
<dbReference type="EMDB" id="EMD-3979"/>
<dbReference type="EMDB" id="EMD-4055"/>
<dbReference type="EMDB" id="EMD-4057"/>
<dbReference type="EMDB" id="EMD-4364"/>
<dbReference type="EMDB" id="EMD-43753"/>
<dbReference type="EMDB" id="EMD-47157"/>
<dbReference type="EMDB" id="EMD-6817"/>
<dbReference type="EMDB" id="EMD-6839"/>
<dbReference type="EMDB" id="EMD-6972"/>
<dbReference type="EMDB" id="EMD-6973"/>
<dbReference type="EMDB" id="EMD-6974"/>
<dbReference type="EMDB" id="EMD-7109"/>
<dbReference type="EMDB" id="EMD-8011"/>
<dbReference type="EMDB" id="EMD-8012"/>
<dbReference type="EMDB" id="EMD-8013"/>
<dbReference type="EMDB" id="EMD-8622"/>
<dbReference type="EMDB" id="EMD-9524"/>
<dbReference type="EMDB" id="EMD-9525"/>
<dbReference type="SMR" id="P54999"/>
<dbReference type="BioGRID" id="36354">
    <property type="interactions" value="589"/>
</dbReference>
<dbReference type="ComplexPortal" id="CPX-1651">
    <property type="entry name" value="PRP19-associated complex"/>
</dbReference>
<dbReference type="ComplexPortal" id="CPX-23">
    <property type="entry name" value="U1 small nuclear ribonucleoprotein complex"/>
</dbReference>
<dbReference type="ComplexPortal" id="CPX-25">
    <property type="entry name" value="U4/U6.U5 tri-small nuclear ribonucleoprotein complex"/>
</dbReference>
<dbReference type="ComplexPortal" id="CPX-26">
    <property type="entry name" value="U2 small nuclear ribonucleoprotein complex"/>
</dbReference>
<dbReference type="ComplexPortal" id="CPX-29">
    <property type="entry name" value="U5 small nuclear ribonucleoprotein complex"/>
</dbReference>
<dbReference type="ComplexPortal" id="CPX-30">
    <property type="entry name" value="U5 small nuclear ribonucleoprotein complex, AAR2 variant"/>
</dbReference>
<dbReference type="ComplexPortal" id="CPX-31">
    <property type="entry name" value="U4 small nuclear ribonucleoprotein complex"/>
</dbReference>
<dbReference type="ComplexPortal" id="CPX-32">
    <property type="entry name" value="U4/U6 small nuclear ribonucleoprotein complex"/>
</dbReference>
<dbReference type="ComplexPortal" id="CPX-43">
    <property type="entry name" value="Sm complex"/>
</dbReference>
<dbReference type="DIP" id="DIP-1634N"/>
<dbReference type="FunCoup" id="P54999">
    <property type="interactions" value="904"/>
</dbReference>
<dbReference type="IntAct" id="P54999">
    <property type="interactions" value="79"/>
</dbReference>
<dbReference type="MINT" id="P54999"/>
<dbReference type="STRING" id="4932.YPR182W"/>
<dbReference type="iPTMnet" id="P54999"/>
<dbReference type="PaxDb" id="4932-YPR182W"/>
<dbReference type="PeptideAtlas" id="P54999"/>
<dbReference type="EnsemblFungi" id="YPR182W_mRNA">
    <property type="protein sequence ID" value="YPR182W"/>
    <property type="gene ID" value="YPR182W"/>
</dbReference>
<dbReference type="GeneID" id="856312"/>
<dbReference type="KEGG" id="sce:YPR182W"/>
<dbReference type="AGR" id="SGD:S000006386"/>
<dbReference type="SGD" id="S000006386">
    <property type="gene designation" value="SMX3"/>
</dbReference>
<dbReference type="VEuPathDB" id="FungiDB:YPR182W"/>
<dbReference type="eggNOG" id="KOG3482">
    <property type="taxonomic scope" value="Eukaryota"/>
</dbReference>
<dbReference type="GeneTree" id="ENSGT00940000154818"/>
<dbReference type="HOGENOM" id="CLU_076902_12_3_1"/>
<dbReference type="InParanoid" id="P54999"/>
<dbReference type="OMA" id="GYMNVQL"/>
<dbReference type="OrthoDB" id="409625at2759"/>
<dbReference type="BioCyc" id="YEAST:G3O-34307-MONOMER"/>
<dbReference type="BioGRID-ORCS" id="856312">
    <property type="hits" value="10 hits in 10 CRISPR screens"/>
</dbReference>
<dbReference type="EvolutionaryTrace" id="P54999"/>
<dbReference type="PRO" id="PR:P54999"/>
<dbReference type="Proteomes" id="UP000002311">
    <property type="component" value="Chromosome XVI"/>
</dbReference>
<dbReference type="RNAct" id="P54999">
    <property type="molecule type" value="protein"/>
</dbReference>
<dbReference type="GO" id="GO:0071013">
    <property type="term" value="C:catalytic step 2 spliceosome"/>
    <property type="evidence" value="ECO:0000318"/>
    <property type="project" value="GO_Central"/>
</dbReference>
<dbReference type="GO" id="GO:0000243">
    <property type="term" value="C:commitment complex"/>
    <property type="evidence" value="ECO:0000303"/>
    <property type="project" value="ComplexPortal"/>
</dbReference>
<dbReference type="GO" id="GO:0005737">
    <property type="term" value="C:cytoplasm"/>
    <property type="evidence" value="ECO:0000303"/>
    <property type="project" value="ComplexPortal"/>
</dbReference>
<dbReference type="GO" id="GO:0005634">
    <property type="term" value="C:nucleus"/>
    <property type="evidence" value="ECO:0000303"/>
    <property type="project" value="ComplexPortal"/>
</dbReference>
<dbReference type="GO" id="GO:0034715">
    <property type="term" value="C:pICln-Sm protein complex"/>
    <property type="evidence" value="ECO:0000318"/>
    <property type="project" value="GO_Central"/>
</dbReference>
<dbReference type="GO" id="GO:0000974">
    <property type="term" value="C:Prp19 complex"/>
    <property type="evidence" value="ECO:0000353"/>
    <property type="project" value="ComplexPortal"/>
</dbReference>
<dbReference type="GO" id="GO:0005681">
    <property type="term" value="C:spliceosomal complex"/>
    <property type="evidence" value="ECO:0000303"/>
    <property type="project" value="ComplexPortal"/>
</dbReference>
<dbReference type="GO" id="GO:0005685">
    <property type="term" value="C:U1 snRNP"/>
    <property type="evidence" value="ECO:0000314"/>
    <property type="project" value="SGD"/>
</dbReference>
<dbReference type="GO" id="GO:0005686">
    <property type="term" value="C:U2 snRNP"/>
    <property type="evidence" value="ECO:0000314"/>
    <property type="project" value="SGD"/>
</dbReference>
<dbReference type="GO" id="GO:0005687">
    <property type="term" value="C:U4 snRNP"/>
    <property type="evidence" value="ECO:0000353"/>
    <property type="project" value="ComplexPortal"/>
</dbReference>
<dbReference type="GO" id="GO:0071001">
    <property type="term" value="C:U4/U6 snRNP"/>
    <property type="evidence" value="ECO:0000303"/>
    <property type="project" value="ComplexPortal"/>
</dbReference>
<dbReference type="GO" id="GO:0046540">
    <property type="term" value="C:U4/U6 x U5 tri-snRNP complex"/>
    <property type="evidence" value="ECO:0000314"/>
    <property type="project" value="SGD"/>
</dbReference>
<dbReference type="GO" id="GO:0005682">
    <property type="term" value="C:U5 snRNP"/>
    <property type="evidence" value="ECO:0000314"/>
    <property type="project" value="SGD"/>
</dbReference>
<dbReference type="GO" id="GO:0008266">
    <property type="term" value="F:poly(U) RNA binding"/>
    <property type="evidence" value="ECO:0000314"/>
    <property type="project" value="SGD"/>
</dbReference>
<dbReference type="GO" id="GO:0003723">
    <property type="term" value="F:RNA binding"/>
    <property type="evidence" value="ECO:0000318"/>
    <property type="project" value="GO_Central"/>
</dbReference>
<dbReference type="GO" id="GO:1990935">
    <property type="term" value="F:splicing factor binding"/>
    <property type="evidence" value="ECO:0000353"/>
    <property type="project" value="SGD"/>
</dbReference>
<dbReference type="GO" id="GO:0036261">
    <property type="term" value="P:7-methylguanosine cap hypermethylation"/>
    <property type="evidence" value="ECO:0000315"/>
    <property type="project" value="ComplexPortal"/>
</dbReference>
<dbReference type="GO" id="GO:0000395">
    <property type="term" value="P:mRNA 5'-splice site recognition"/>
    <property type="evidence" value="ECO:0000303"/>
    <property type="project" value="ComplexPortal"/>
</dbReference>
<dbReference type="GO" id="GO:0000398">
    <property type="term" value="P:mRNA splicing, via spliceosome"/>
    <property type="evidence" value="ECO:0000353"/>
    <property type="project" value="ComplexPortal"/>
</dbReference>
<dbReference type="GO" id="GO:0000245">
    <property type="term" value="P:spliceosomal complex assembly"/>
    <property type="evidence" value="ECO:0000303"/>
    <property type="project" value="ComplexPortal"/>
</dbReference>
<dbReference type="GO" id="GO:0000387">
    <property type="term" value="P:spliceosomal snRNP assembly"/>
    <property type="evidence" value="ECO:0000303"/>
    <property type="project" value="ComplexPortal"/>
</dbReference>
<dbReference type="GO" id="GO:1903241">
    <property type="term" value="P:U2-type prespliceosome assembly"/>
    <property type="evidence" value="ECO:0000303"/>
    <property type="project" value="ComplexPortal"/>
</dbReference>
<dbReference type="CDD" id="cd01722">
    <property type="entry name" value="Sm_F"/>
    <property type="match status" value="1"/>
</dbReference>
<dbReference type="FunFam" id="2.30.30.100:FF:000070">
    <property type="entry name" value="Small nuclear ribonucleoprotein F"/>
    <property type="match status" value="1"/>
</dbReference>
<dbReference type="Gene3D" id="2.30.30.100">
    <property type="match status" value="1"/>
</dbReference>
<dbReference type="InterPro" id="IPR016487">
    <property type="entry name" value="Lsm6/sSmF"/>
</dbReference>
<dbReference type="InterPro" id="IPR010920">
    <property type="entry name" value="LSM_dom_sf"/>
</dbReference>
<dbReference type="InterPro" id="IPR047575">
    <property type="entry name" value="Sm"/>
</dbReference>
<dbReference type="InterPro" id="IPR001163">
    <property type="entry name" value="Sm_dom_euk/arc"/>
</dbReference>
<dbReference type="InterPro" id="IPR034100">
    <property type="entry name" value="Sm_F"/>
</dbReference>
<dbReference type="PANTHER" id="PTHR11021:SF0">
    <property type="entry name" value="SMALL NUCLEAR RIBONUCLEOPROTEIN F"/>
    <property type="match status" value="1"/>
</dbReference>
<dbReference type="PANTHER" id="PTHR11021">
    <property type="entry name" value="SMALL NUCLEAR RIBONUCLEOPROTEIN F SNRNP-F"/>
    <property type="match status" value="1"/>
</dbReference>
<dbReference type="Pfam" id="PF01423">
    <property type="entry name" value="LSM"/>
    <property type="match status" value="1"/>
</dbReference>
<dbReference type="PIRSF" id="PIRSF006609">
    <property type="entry name" value="snRNP_SmF"/>
    <property type="match status" value="1"/>
</dbReference>
<dbReference type="SMART" id="SM00651">
    <property type="entry name" value="Sm"/>
    <property type="match status" value="1"/>
</dbReference>
<dbReference type="SUPFAM" id="SSF50182">
    <property type="entry name" value="Sm-like ribonucleoproteins"/>
    <property type="match status" value="1"/>
</dbReference>
<dbReference type="PROSITE" id="PS52002">
    <property type="entry name" value="SM"/>
    <property type="match status" value="1"/>
</dbReference>
<protein>
    <recommendedName>
        <fullName>Small nuclear ribonucleoprotein F</fullName>
        <shortName>snRNP-F</shortName>
    </recommendedName>
    <alternativeName>
        <fullName>Sm protein F</fullName>
        <shortName>Sm-F</shortName>
        <shortName>SmF</shortName>
    </alternativeName>
</protein>
<feature type="chain" id="PRO_0000125544" description="Small nuclear ribonucleoprotein F">
    <location>
        <begin position="1"/>
        <end position="86"/>
    </location>
</feature>
<feature type="domain" description="Sm" evidence="3">
    <location>
        <begin position="14"/>
        <end position="86"/>
    </location>
</feature>
<feature type="helix" evidence="11">
    <location>
        <begin position="15"/>
        <end position="21"/>
    </location>
</feature>
<feature type="turn" evidence="11">
    <location>
        <begin position="22"/>
        <end position="24"/>
    </location>
</feature>
<feature type="strand" evidence="11">
    <location>
        <begin position="25"/>
        <end position="33"/>
    </location>
</feature>
<feature type="strand" evidence="11">
    <location>
        <begin position="36"/>
        <end position="45"/>
    </location>
</feature>
<feature type="turn" evidence="10">
    <location>
        <begin position="47"/>
        <end position="49"/>
    </location>
</feature>
<feature type="strand" evidence="11">
    <location>
        <begin position="51"/>
        <end position="60"/>
    </location>
</feature>
<feature type="strand" evidence="11">
    <location>
        <begin position="63"/>
        <end position="73"/>
    </location>
</feature>
<feature type="helix" evidence="11">
    <location>
        <begin position="75"/>
        <end position="77"/>
    </location>
</feature>
<feature type="strand" evidence="11">
    <location>
        <begin position="78"/>
        <end position="83"/>
    </location>
</feature>
<gene>
    <name type="primary">SMX3</name>
    <name type="ordered locus">YPR182W</name>
    <name type="ORF">P9705.4</name>
</gene>
<evidence type="ECO:0000250" key="1">
    <source>
        <dbReference type="UniProtKB" id="O59734"/>
    </source>
</evidence>
<evidence type="ECO:0000250" key="2">
    <source>
        <dbReference type="UniProtKB" id="P62306"/>
    </source>
</evidence>
<evidence type="ECO:0000255" key="3">
    <source>
        <dbReference type="PROSITE-ProRule" id="PRU01346"/>
    </source>
</evidence>
<evidence type="ECO:0000269" key="4">
    <source>
    </source>
</evidence>
<evidence type="ECO:0000269" key="5">
    <source>
    </source>
</evidence>
<evidence type="ECO:0000269" key="6">
    <source>
    </source>
</evidence>
<evidence type="ECO:0000269" key="7">
    <source>
    </source>
</evidence>
<evidence type="ECO:0000269" key="8">
    <source>
    </source>
</evidence>
<evidence type="ECO:0000305" key="9"/>
<evidence type="ECO:0007829" key="10">
    <source>
        <dbReference type="PDB" id="1N9R"/>
    </source>
</evidence>
<evidence type="ECO:0007829" key="11">
    <source>
        <dbReference type="PDB" id="9DTR"/>
    </source>
</evidence>
<sequence>MSESSDISAMQPVNPKPFLKGLVNHRVGVKLKFNSTEYRGTLVSTDNYFNLQLNEAEEFVAGVSHGTLGEIFIRCNNVLYIRELPN</sequence>